<comment type="subcellular location">
    <subcellularLocation>
        <location evidence="1">Membrane</location>
        <topology evidence="1">Multi-pass membrane protein</topology>
    </subcellularLocation>
</comment>
<comment type="tissue specificity">
    <text evidence="3">Predominantly expressed in CNS.</text>
</comment>
<comment type="similarity">
    <text evidence="4">Belongs to the G-protein coupled receptor 2 family. Adhesion G-protein coupled receptor (ADGR) subfamily.</text>
</comment>
<accession>Q8C4G9</accession>
<accession>Q8CC05</accession>
<feature type="chain" id="PRO_0000433253" description="Adhesion G protein-coupled receptor A1">
    <location>
        <begin position="1"/>
        <end position="578"/>
    </location>
</feature>
<feature type="topological domain" description="Extracellular" evidence="4">
    <location>
        <begin position="1"/>
        <end position="22"/>
    </location>
</feature>
<feature type="transmembrane region" description="Helical; Name=1" evidence="1">
    <location>
        <begin position="23"/>
        <end position="43"/>
    </location>
</feature>
<feature type="topological domain" description="Cytoplasmic" evidence="4">
    <location>
        <begin position="44"/>
        <end position="56"/>
    </location>
</feature>
<feature type="transmembrane region" description="Helical; Name=2" evidence="1">
    <location>
        <begin position="57"/>
        <end position="77"/>
    </location>
</feature>
<feature type="topological domain" description="Extracellular" evidence="4">
    <location>
        <begin position="78"/>
        <end position="87"/>
    </location>
</feature>
<feature type="transmembrane region" description="Helical; Name=3" evidence="1">
    <location>
        <begin position="88"/>
        <end position="108"/>
    </location>
</feature>
<feature type="topological domain" description="Cytoplasmic" evidence="4">
    <location>
        <begin position="109"/>
        <end position="137"/>
    </location>
</feature>
<feature type="transmembrane region" description="Helical; Name=4" evidence="1">
    <location>
        <begin position="138"/>
        <end position="158"/>
    </location>
</feature>
<feature type="topological domain" description="Extracellular" evidence="4">
    <location>
        <begin position="159"/>
        <end position="178"/>
    </location>
</feature>
<feature type="transmembrane region" description="Helical; Name=5" evidence="1">
    <location>
        <begin position="179"/>
        <end position="199"/>
    </location>
</feature>
<feature type="topological domain" description="Cytoplasmic" evidence="4">
    <location>
        <begin position="200"/>
        <end position="262"/>
    </location>
</feature>
<feature type="transmembrane region" description="Helical; Name=6" evidence="1">
    <location>
        <begin position="263"/>
        <end position="283"/>
    </location>
</feature>
<feature type="topological domain" description="Extracellular" evidence="4">
    <location>
        <begin position="284"/>
        <end position="289"/>
    </location>
</feature>
<feature type="transmembrane region" description="Helical; Name=7" evidence="1">
    <location>
        <begin position="290"/>
        <end position="310"/>
    </location>
</feature>
<feature type="region of interest" description="Disordered" evidence="2">
    <location>
        <begin position="216"/>
        <end position="236"/>
    </location>
</feature>
<feature type="region of interest" description="Disordered" evidence="2">
    <location>
        <begin position="463"/>
        <end position="486"/>
    </location>
</feature>
<feature type="region of interest" description="Disordered" evidence="2">
    <location>
        <begin position="537"/>
        <end position="578"/>
    </location>
</feature>
<feature type="compositionally biased region" description="Low complexity" evidence="2">
    <location>
        <begin position="469"/>
        <end position="481"/>
    </location>
</feature>
<feature type="compositionally biased region" description="Polar residues" evidence="2">
    <location>
        <begin position="537"/>
        <end position="548"/>
    </location>
</feature>
<feature type="sequence conflict" description="In Ref. 1; BAC28624." evidence="4" ref="1">
    <original>F</original>
    <variation>C</variation>
    <location>
        <position position="446"/>
    </location>
</feature>
<reference key="1">
    <citation type="journal article" date="2005" name="Science">
        <title>The transcriptional landscape of the mammalian genome.</title>
        <authorList>
            <person name="Carninci P."/>
            <person name="Kasukawa T."/>
            <person name="Katayama S."/>
            <person name="Gough J."/>
            <person name="Frith M.C."/>
            <person name="Maeda N."/>
            <person name="Oyama R."/>
            <person name="Ravasi T."/>
            <person name="Lenhard B."/>
            <person name="Wells C."/>
            <person name="Kodzius R."/>
            <person name="Shimokawa K."/>
            <person name="Bajic V.B."/>
            <person name="Brenner S.E."/>
            <person name="Batalov S."/>
            <person name="Forrest A.R."/>
            <person name="Zavolan M."/>
            <person name="Davis M.J."/>
            <person name="Wilming L.G."/>
            <person name="Aidinis V."/>
            <person name="Allen J.E."/>
            <person name="Ambesi-Impiombato A."/>
            <person name="Apweiler R."/>
            <person name="Aturaliya R.N."/>
            <person name="Bailey T.L."/>
            <person name="Bansal M."/>
            <person name="Baxter L."/>
            <person name="Beisel K.W."/>
            <person name="Bersano T."/>
            <person name="Bono H."/>
            <person name="Chalk A.M."/>
            <person name="Chiu K.P."/>
            <person name="Choudhary V."/>
            <person name="Christoffels A."/>
            <person name="Clutterbuck D.R."/>
            <person name="Crowe M.L."/>
            <person name="Dalla E."/>
            <person name="Dalrymple B.P."/>
            <person name="de Bono B."/>
            <person name="Della Gatta G."/>
            <person name="di Bernardo D."/>
            <person name="Down T."/>
            <person name="Engstrom P."/>
            <person name="Fagiolini M."/>
            <person name="Faulkner G."/>
            <person name="Fletcher C.F."/>
            <person name="Fukushima T."/>
            <person name="Furuno M."/>
            <person name="Futaki S."/>
            <person name="Gariboldi M."/>
            <person name="Georgii-Hemming P."/>
            <person name="Gingeras T.R."/>
            <person name="Gojobori T."/>
            <person name="Green R.E."/>
            <person name="Gustincich S."/>
            <person name="Harbers M."/>
            <person name="Hayashi Y."/>
            <person name="Hensch T.K."/>
            <person name="Hirokawa N."/>
            <person name="Hill D."/>
            <person name="Huminiecki L."/>
            <person name="Iacono M."/>
            <person name="Ikeo K."/>
            <person name="Iwama A."/>
            <person name="Ishikawa T."/>
            <person name="Jakt M."/>
            <person name="Kanapin A."/>
            <person name="Katoh M."/>
            <person name="Kawasawa Y."/>
            <person name="Kelso J."/>
            <person name="Kitamura H."/>
            <person name="Kitano H."/>
            <person name="Kollias G."/>
            <person name="Krishnan S.P."/>
            <person name="Kruger A."/>
            <person name="Kummerfeld S.K."/>
            <person name="Kurochkin I.V."/>
            <person name="Lareau L.F."/>
            <person name="Lazarevic D."/>
            <person name="Lipovich L."/>
            <person name="Liu J."/>
            <person name="Liuni S."/>
            <person name="McWilliam S."/>
            <person name="Madan Babu M."/>
            <person name="Madera M."/>
            <person name="Marchionni L."/>
            <person name="Matsuda H."/>
            <person name="Matsuzawa S."/>
            <person name="Miki H."/>
            <person name="Mignone F."/>
            <person name="Miyake S."/>
            <person name="Morris K."/>
            <person name="Mottagui-Tabar S."/>
            <person name="Mulder N."/>
            <person name="Nakano N."/>
            <person name="Nakauchi H."/>
            <person name="Ng P."/>
            <person name="Nilsson R."/>
            <person name="Nishiguchi S."/>
            <person name="Nishikawa S."/>
            <person name="Nori F."/>
            <person name="Ohara O."/>
            <person name="Okazaki Y."/>
            <person name="Orlando V."/>
            <person name="Pang K.C."/>
            <person name="Pavan W.J."/>
            <person name="Pavesi G."/>
            <person name="Pesole G."/>
            <person name="Petrovsky N."/>
            <person name="Piazza S."/>
            <person name="Reed J."/>
            <person name="Reid J.F."/>
            <person name="Ring B.Z."/>
            <person name="Ringwald M."/>
            <person name="Rost B."/>
            <person name="Ruan Y."/>
            <person name="Salzberg S.L."/>
            <person name="Sandelin A."/>
            <person name="Schneider C."/>
            <person name="Schoenbach C."/>
            <person name="Sekiguchi K."/>
            <person name="Semple C.A."/>
            <person name="Seno S."/>
            <person name="Sessa L."/>
            <person name="Sheng Y."/>
            <person name="Shibata Y."/>
            <person name="Shimada H."/>
            <person name="Shimada K."/>
            <person name="Silva D."/>
            <person name="Sinclair B."/>
            <person name="Sperling S."/>
            <person name="Stupka E."/>
            <person name="Sugiura K."/>
            <person name="Sultana R."/>
            <person name="Takenaka Y."/>
            <person name="Taki K."/>
            <person name="Tammoja K."/>
            <person name="Tan S.L."/>
            <person name="Tang S."/>
            <person name="Taylor M.S."/>
            <person name="Tegner J."/>
            <person name="Teichmann S.A."/>
            <person name="Ueda H.R."/>
            <person name="van Nimwegen E."/>
            <person name="Verardo R."/>
            <person name="Wei C.L."/>
            <person name="Yagi K."/>
            <person name="Yamanishi H."/>
            <person name="Zabarovsky E."/>
            <person name="Zhu S."/>
            <person name="Zimmer A."/>
            <person name="Hide W."/>
            <person name="Bult C."/>
            <person name="Grimmond S.M."/>
            <person name="Teasdale R.D."/>
            <person name="Liu E.T."/>
            <person name="Brusic V."/>
            <person name="Quackenbush J."/>
            <person name="Wahlestedt C."/>
            <person name="Mattick J.S."/>
            <person name="Hume D.A."/>
            <person name="Kai C."/>
            <person name="Sasaki D."/>
            <person name="Tomaru Y."/>
            <person name="Fukuda S."/>
            <person name="Kanamori-Katayama M."/>
            <person name="Suzuki M."/>
            <person name="Aoki J."/>
            <person name="Arakawa T."/>
            <person name="Iida J."/>
            <person name="Imamura K."/>
            <person name="Itoh M."/>
            <person name="Kato T."/>
            <person name="Kawaji H."/>
            <person name="Kawagashira N."/>
            <person name="Kawashima T."/>
            <person name="Kojima M."/>
            <person name="Kondo S."/>
            <person name="Konno H."/>
            <person name="Nakano K."/>
            <person name="Ninomiya N."/>
            <person name="Nishio T."/>
            <person name="Okada M."/>
            <person name="Plessy C."/>
            <person name="Shibata K."/>
            <person name="Shiraki T."/>
            <person name="Suzuki S."/>
            <person name="Tagami M."/>
            <person name="Waki K."/>
            <person name="Watahiki A."/>
            <person name="Okamura-Oho Y."/>
            <person name="Suzuki H."/>
            <person name="Kawai J."/>
            <person name="Hayashizaki Y."/>
        </authorList>
    </citation>
    <scope>NUCLEOTIDE SEQUENCE [LARGE SCALE MRNA]</scope>
    <source>
        <strain>C57BL/6J</strain>
        <tissue>Cerebellum</tissue>
    </source>
</reference>
<reference key="2">
    <citation type="journal article" date="2009" name="PLoS Biol.">
        <title>Lineage-specific biology revealed by a finished genome assembly of the mouse.</title>
        <authorList>
            <person name="Church D.M."/>
            <person name="Goodstadt L."/>
            <person name="Hillier L.W."/>
            <person name="Zody M.C."/>
            <person name="Goldstein S."/>
            <person name="She X."/>
            <person name="Bult C.J."/>
            <person name="Agarwala R."/>
            <person name="Cherry J.L."/>
            <person name="DiCuccio M."/>
            <person name="Hlavina W."/>
            <person name="Kapustin Y."/>
            <person name="Meric P."/>
            <person name="Maglott D."/>
            <person name="Birtle Z."/>
            <person name="Marques A.C."/>
            <person name="Graves T."/>
            <person name="Zhou S."/>
            <person name="Teague B."/>
            <person name="Potamousis K."/>
            <person name="Churas C."/>
            <person name="Place M."/>
            <person name="Herschleb J."/>
            <person name="Runnheim R."/>
            <person name="Forrest D."/>
            <person name="Amos-Landgraf J."/>
            <person name="Schwartz D.C."/>
            <person name="Cheng Z."/>
            <person name="Lindblad-Toh K."/>
            <person name="Eichler E.E."/>
            <person name="Ponting C.P."/>
        </authorList>
    </citation>
    <scope>NUCLEOTIDE SEQUENCE [LARGE SCALE GENOMIC DNA]</scope>
    <source>
        <strain>C57BL/6J</strain>
    </source>
</reference>
<reference key="3">
    <citation type="submission" date="2005-07" db="EMBL/GenBank/DDBJ databases">
        <authorList>
            <person name="Mural R.J."/>
            <person name="Adams M.D."/>
            <person name="Myers E.W."/>
            <person name="Smith H.O."/>
            <person name="Venter J.C."/>
        </authorList>
    </citation>
    <scope>NUCLEOTIDE SEQUENCE [LARGE SCALE GENOMIC DNA]</scope>
</reference>
<reference key="4">
    <citation type="journal article" date="2007" name="J. Neurochem.">
        <title>The evolutionary history and tissue mapping of GPR123: specific CNS expression pattern predominantly in thalamic nuclei and regions containing large pyramidal cells.</title>
        <authorList>
            <person name="Lagerstrom M.C."/>
            <person name="Rabe N."/>
            <person name="Haitina T."/>
            <person name="Kalnina I."/>
            <person name="Hellstrom A.R."/>
            <person name="Klovins J."/>
            <person name="Kullander K."/>
            <person name="Schioth H.B."/>
        </authorList>
    </citation>
    <scope>TISSUE SPECIFICITY</scope>
</reference>
<name>AGRA1_MOUSE</name>
<evidence type="ECO:0000255" key="1"/>
<evidence type="ECO:0000256" key="2">
    <source>
        <dbReference type="SAM" id="MobiDB-lite"/>
    </source>
</evidence>
<evidence type="ECO:0000269" key="3">
    <source>
    </source>
</evidence>
<evidence type="ECO:0000305" key="4"/>
<evidence type="ECO:0000312" key="5">
    <source>
        <dbReference type="MGI" id="MGI:1277167"/>
    </source>
</evidence>
<dbReference type="EMBL" id="AK082207">
    <property type="protein sequence ID" value="BAC38439.1"/>
    <property type="molecule type" value="mRNA"/>
</dbReference>
<dbReference type="EMBL" id="AK034188">
    <property type="protein sequence ID" value="BAC28624.1"/>
    <property type="molecule type" value="mRNA"/>
</dbReference>
<dbReference type="EMBL" id="AC107822">
    <property type="status" value="NOT_ANNOTATED_CDS"/>
    <property type="molecule type" value="Genomic_DNA"/>
</dbReference>
<dbReference type="EMBL" id="CH466531">
    <property type="protein sequence ID" value="EDL17867.1"/>
    <property type="molecule type" value="Genomic_DNA"/>
</dbReference>
<dbReference type="CCDS" id="CCDS40171.1"/>
<dbReference type="RefSeq" id="NP_803420.2">
    <property type="nucleotide sequence ID" value="NM_177469.3"/>
</dbReference>
<dbReference type="SMR" id="Q8C4G9"/>
<dbReference type="FunCoup" id="Q8C4G9">
    <property type="interactions" value="65"/>
</dbReference>
<dbReference type="IntAct" id="Q8C4G9">
    <property type="interactions" value="1"/>
</dbReference>
<dbReference type="STRING" id="10090.ENSMUSP00000026548"/>
<dbReference type="iPTMnet" id="Q8C4G9"/>
<dbReference type="PhosphoSitePlus" id="Q8C4G9"/>
<dbReference type="SwissPalm" id="Q8C4G9"/>
<dbReference type="PaxDb" id="10090-ENSMUSP00000026548"/>
<dbReference type="ProteomicsDB" id="281956"/>
<dbReference type="Antibodypedia" id="48655">
    <property type="antibodies" value="67 antibodies from 22 providers"/>
</dbReference>
<dbReference type="DNASU" id="52389"/>
<dbReference type="Ensembl" id="ENSMUST00000026548.14">
    <property type="protein sequence ID" value="ENSMUSP00000026548.8"/>
    <property type="gene ID" value="ENSMUSG00000025475.18"/>
</dbReference>
<dbReference type="GeneID" id="52389"/>
<dbReference type="KEGG" id="mmu:52389"/>
<dbReference type="UCSC" id="uc009kgb.1">
    <property type="organism name" value="mouse"/>
</dbReference>
<dbReference type="AGR" id="MGI:1277167"/>
<dbReference type="CTD" id="84435"/>
<dbReference type="MGI" id="MGI:1277167">
    <property type="gene designation" value="Adgra1"/>
</dbReference>
<dbReference type="VEuPathDB" id="HostDB:ENSMUSG00000025475"/>
<dbReference type="eggNOG" id="KOG0619">
    <property type="taxonomic scope" value="Eukaryota"/>
</dbReference>
<dbReference type="GeneTree" id="ENSGT00940000160175"/>
<dbReference type="HOGENOM" id="CLU_020720_1_0_1"/>
<dbReference type="InParanoid" id="Q8C4G9"/>
<dbReference type="OMA" id="AHIHVHE"/>
<dbReference type="OrthoDB" id="10031018at2759"/>
<dbReference type="PhylomeDB" id="Q8C4G9"/>
<dbReference type="TreeFam" id="TF331206"/>
<dbReference type="BioGRID-ORCS" id="52389">
    <property type="hits" value="3 hits in 79 CRISPR screens"/>
</dbReference>
<dbReference type="CD-CODE" id="CE726F99">
    <property type="entry name" value="Postsynaptic density"/>
</dbReference>
<dbReference type="PRO" id="PR:Q8C4G9"/>
<dbReference type="Proteomes" id="UP000000589">
    <property type="component" value="Chromosome 7"/>
</dbReference>
<dbReference type="RNAct" id="Q8C4G9">
    <property type="molecule type" value="protein"/>
</dbReference>
<dbReference type="Bgee" id="ENSMUSG00000025475">
    <property type="expression patterns" value="Expressed in facial nucleus and 89 other cell types or tissues"/>
</dbReference>
<dbReference type="GO" id="GO:0098978">
    <property type="term" value="C:glutamatergic synapse"/>
    <property type="evidence" value="ECO:0000314"/>
    <property type="project" value="SynGO"/>
</dbReference>
<dbReference type="GO" id="GO:0016020">
    <property type="term" value="C:membrane"/>
    <property type="evidence" value="ECO:0007669"/>
    <property type="project" value="UniProtKB-SubCell"/>
</dbReference>
<dbReference type="GO" id="GO:0014069">
    <property type="term" value="C:postsynaptic density"/>
    <property type="evidence" value="ECO:0000314"/>
    <property type="project" value="SynGO"/>
</dbReference>
<dbReference type="GO" id="GO:0004930">
    <property type="term" value="F:G protein-coupled receptor activity"/>
    <property type="evidence" value="ECO:0007669"/>
    <property type="project" value="InterPro"/>
</dbReference>
<dbReference type="GO" id="GO:0007166">
    <property type="term" value="P:cell surface receptor signaling pathway"/>
    <property type="evidence" value="ECO:0007669"/>
    <property type="project" value="InterPro"/>
</dbReference>
<dbReference type="Gene3D" id="1.20.1070.10">
    <property type="entry name" value="Rhodopsin 7-helix transmembrane proteins"/>
    <property type="match status" value="1"/>
</dbReference>
<dbReference type="InterPro" id="IPR051963">
    <property type="entry name" value="Adhesion_GPCR_A"/>
</dbReference>
<dbReference type="InterPro" id="IPR017981">
    <property type="entry name" value="GPCR_2-like_7TM"/>
</dbReference>
<dbReference type="InterPro" id="IPR000832">
    <property type="entry name" value="GPCR_2_secretin-like"/>
</dbReference>
<dbReference type="InterPro" id="IPR017983">
    <property type="entry name" value="GPCR_2_secretin-like_CS"/>
</dbReference>
<dbReference type="PANTHER" id="PTHR45930:SF3">
    <property type="entry name" value="ADHESION G PROTEIN-COUPLED RECEPTOR A1"/>
    <property type="match status" value="1"/>
</dbReference>
<dbReference type="PANTHER" id="PTHR45930">
    <property type="entry name" value="G-PROTEIN COUPLED RECEPTOR 124-LIKE PROTEIN"/>
    <property type="match status" value="1"/>
</dbReference>
<dbReference type="Pfam" id="PF00002">
    <property type="entry name" value="7tm_2"/>
    <property type="match status" value="1"/>
</dbReference>
<dbReference type="PROSITE" id="PS00650">
    <property type="entry name" value="G_PROTEIN_RECEP_F2_2"/>
    <property type="match status" value="1"/>
</dbReference>
<dbReference type="PROSITE" id="PS50261">
    <property type="entry name" value="G_PROTEIN_RECEP_F2_4"/>
    <property type="match status" value="1"/>
</dbReference>
<gene>
    <name evidence="5" type="primary">Adgra1</name>
    <name type="synonym">Gpr123</name>
</gene>
<keyword id="KW-0472">Membrane</keyword>
<keyword id="KW-0675">Receptor</keyword>
<keyword id="KW-1185">Reference proteome</keyword>
<keyword id="KW-0812">Transmembrane</keyword>
<keyword id="KW-1133">Transmembrane helix</keyword>
<organism>
    <name type="scientific">Mus musculus</name>
    <name type="common">Mouse</name>
    <dbReference type="NCBI Taxonomy" id="10090"/>
    <lineage>
        <taxon>Eukaryota</taxon>
        <taxon>Metazoa</taxon>
        <taxon>Chordata</taxon>
        <taxon>Craniata</taxon>
        <taxon>Vertebrata</taxon>
        <taxon>Euteleostomi</taxon>
        <taxon>Mammalia</taxon>
        <taxon>Eutheria</taxon>
        <taxon>Euarchontoglires</taxon>
        <taxon>Glires</taxon>
        <taxon>Rodentia</taxon>
        <taxon>Myomorpha</taxon>
        <taxon>Muroidea</taxon>
        <taxon>Muridae</taxon>
        <taxon>Murinae</taxon>
        <taxon>Mus</taxon>
        <taxon>Mus</taxon>
    </lineage>
</organism>
<sequence length="578" mass="63497">MTQWDLKTVLSLPQYPGEFLHPVVYACTAVMLLCLLASVITYILHQSAIRISRKGRHALLNFCFHAALTFTVFAGGINRTQHPILCQAVGIALHYSTLSTMLWIGVTARNIYKQVTKKALPCPGADQPPYPKQPLLRFYLISGGVPFIICGVTAATNIRNYGTEDEDVAYCWMAWEPSLGAFYGPAAFIALVTCVYFLCTYVQLRRHPERRYELRERTEEQQRLAVPESGHRHGVRPGTPPTCDALAASQLQNEHSFKAQLRAAAFTLFLFTATWTFGALAVSQGHFLDMIFSCLYGAFCVTLGLFVLIHHCAKREDVWQCWWSCCPSRGDTSTTKPGAHPTLDANGDALGHTACLQDSPCPGKLRGFGHPPASHCKMTNLQAAQGHVSCLSPATPCCAKMHCEQLMEEEAAHIHMAEEDVYPHDPHLHDPHLHRCLKGRTKSHYFSRHQAAAAEREYAYHIPSSLDGSPHSSRSESPTSSLEGPMGMHTLACCAQADPFPMVSQPEGGDTSPGLYGCPPHLSPGPAHLEMLRRTQSLPFGGPSQNGLLQGDVREGLPFGTDGTGNIRTGPWKNETTV</sequence>
<protein>
    <recommendedName>
        <fullName>Adhesion G protein-coupled receptor A1</fullName>
    </recommendedName>
    <alternativeName>
        <fullName>G-protein coupled receptor 123</fullName>
    </alternativeName>
</protein>
<proteinExistence type="evidence at transcript level"/>